<feature type="chain" id="PRO_0000057484" description="tRNA pseudouridine synthase A">
    <location>
        <begin position="1"/>
        <end position="262"/>
    </location>
</feature>
<feature type="active site" description="Nucleophile" evidence="1">
    <location>
        <position position="51"/>
    </location>
</feature>
<feature type="binding site" evidence="1">
    <location>
        <position position="109"/>
    </location>
    <ligand>
        <name>substrate</name>
    </ligand>
</feature>
<accession>Q5E455</accession>
<name>TRUA_ALIF1</name>
<proteinExistence type="inferred from homology"/>
<dbReference type="EC" id="5.4.99.12" evidence="1"/>
<dbReference type="EMBL" id="CP000020">
    <property type="protein sequence ID" value="AAW86191.1"/>
    <property type="molecule type" value="Genomic_DNA"/>
</dbReference>
<dbReference type="RefSeq" id="WP_011262251.1">
    <property type="nucleotide sequence ID" value="NZ_CAWLES010000001.1"/>
</dbReference>
<dbReference type="RefSeq" id="YP_205079.1">
    <property type="nucleotide sequence ID" value="NC_006840.2"/>
</dbReference>
<dbReference type="SMR" id="Q5E455"/>
<dbReference type="STRING" id="312309.VF_1696"/>
<dbReference type="EnsemblBacteria" id="AAW86191">
    <property type="protein sequence ID" value="AAW86191"/>
    <property type="gene ID" value="VF_1696"/>
</dbReference>
<dbReference type="GeneID" id="54164391"/>
<dbReference type="KEGG" id="vfi:VF_1696"/>
<dbReference type="PATRIC" id="fig|312309.11.peg.1718"/>
<dbReference type="eggNOG" id="COG0101">
    <property type="taxonomic scope" value="Bacteria"/>
</dbReference>
<dbReference type="HOGENOM" id="CLU_014673_0_2_6"/>
<dbReference type="OrthoDB" id="9811823at2"/>
<dbReference type="Proteomes" id="UP000000537">
    <property type="component" value="Chromosome I"/>
</dbReference>
<dbReference type="GO" id="GO:0003723">
    <property type="term" value="F:RNA binding"/>
    <property type="evidence" value="ECO:0007669"/>
    <property type="project" value="InterPro"/>
</dbReference>
<dbReference type="GO" id="GO:0160147">
    <property type="term" value="F:tRNA pseudouridine(38-40) synthase activity"/>
    <property type="evidence" value="ECO:0007669"/>
    <property type="project" value="UniProtKB-EC"/>
</dbReference>
<dbReference type="GO" id="GO:0031119">
    <property type="term" value="P:tRNA pseudouridine synthesis"/>
    <property type="evidence" value="ECO:0007669"/>
    <property type="project" value="UniProtKB-UniRule"/>
</dbReference>
<dbReference type="CDD" id="cd02570">
    <property type="entry name" value="PseudoU_synth_EcTruA"/>
    <property type="match status" value="1"/>
</dbReference>
<dbReference type="FunFam" id="3.30.70.580:FF:000001">
    <property type="entry name" value="tRNA pseudouridine synthase A"/>
    <property type="match status" value="1"/>
</dbReference>
<dbReference type="FunFam" id="3.30.70.660:FF:000001">
    <property type="entry name" value="tRNA pseudouridine synthase A"/>
    <property type="match status" value="1"/>
</dbReference>
<dbReference type="Gene3D" id="3.30.70.660">
    <property type="entry name" value="Pseudouridine synthase I, catalytic domain, C-terminal subdomain"/>
    <property type="match status" value="1"/>
</dbReference>
<dbReference type="Gene3D" id="3.30.70.580">
    <property type="entry name" value="Pseudouridine synthase I, catalytic domain, N-terminal subdomain"/>
    <property type="match status" value="1"/>
</dbReference>
<dbReference type="HAMAP" id="MF_00171">
    <property type="entry name" value="TruA"/>
    <property type="match status" value="1"/>
</dbReference>
<dbReference type="InterPro" id="IPR020103">
    <property type="entry name" value="PsdUridine_synth_cat_dom_sf"/>
</dbReference>
<dbReference type="InterPro" id="IPR001406">
    <property type="entry name" value="PsdUridine_synth_TruA"/>
</dbReference>
<dbReference type="InterPro" id="IPR020097">
    <property type="entry name" value="PsdUridine_synth_TruA_a/b_dom"/>
</dbReference>
<dbReference type="InterPro" id="IPR020095">
    <property type="entry name" value="PsdUridine_synth_TruA_C"/>
</dbReference>
<dbReference type="InterPro" id="IPR020094">
    <property type="entry name" value="TruA/RsuA/RluB/E/F_N"/>
</dbReference>
<dbReference type="NCBIfam" id="TIGR00071">
    <property type="entry name" value="hisT_truA"/>
    <property type="match status" value="1"/>
</dbReference>
<dbReference type="PANTHER" id="PTHR11142">
    <property type="entry name" value="PSEUDOURIDYLATE SYNTHASE"/>
    <property type="match status" value="1"/>
</dbReference>
<dbReference type="PANTHER" id="PTHR11142:SF0">
    <property type="entry name" value="TRNA PSEUDOURIDINE SYNTHASE-LIKE 1"/>
    <property type="match status" value="1"/>
</dbReference>
<dbReference type="Pfam" id="PF01416">
    <property type="entry name" value="PseudoU_synth_1"/>
    <property type="match status" value="2"/>
</dbReference>
<dbReference type="PIRSF" id="PIRSF001430">
    <property type="entry name" value="tRNA_psdUrid_synth"/>
    <property type="match status" value="1"/>
</dbReference>
<dbReference type="SUPFAM" id="SSF55120">
    <property type="entry name" value="Pseudouridine synthase"/>
    <property type="match status" value="1"/>
</dbReference>
<comment type="function">
    <text evidence="1">Formation of pseudouridine at positions 38, 39 and 40 in the anticodon stem and loop of transfer RNAs.</text>
</comment>
<comment type="catalytic activity">
    <reaction evidence="1">
        <text>uridine(38/39/40) in tRNA = pseudouridine(38/39/40) in tRNA</text>
        <dbReference type="Rhea" id="RHEA:22376"/>
        <dbReference type="Rhea" id="RHEA-COMP:10085"/>
        <dbReference type="Rhea" id="RHEA-COMP:10087"/>
        <dbReference type="ChEBI" id="CHEBI:65314"/>
        <dbReference type="ChEBI" id="CHEBI:65315"/>
        <dbReference type="EC" id="5.4.99.12"/>
    </reaction>
</comment>
<comment type="subunit">
    <text evidence="1">Homodimer.</text>
</comment>
<comment type="similarity">
    <text evidence="1">Belongs to the tRNA pseudouridine synthase TruA family.</text>
</comment>
<keyword id="KW-0413">Isomerase</keyword>
<keyword id="KW-1185">Reference proteome</keyword>
<keyword id="KW-0819">tRNA processing</keyword>
<evidence type="ECO:0000255" key="1">
    <source>
        <dbReference type="HAMAP-Rule" id="MF_00171"/>
    </source>
</evidence>
<organism>
    <name type="scientific">Aliivibrio fischeri (strain ATCC 700601 / ES114)</name>
    <name type="common">Vibrio fischeri</name>
    <dbReference type="NCBI Taxonomy" id="312309"/>
    <lineage>
        <taxon>Bacteria</taxon>
        <taxon>Pseudomonadati</taxon>
        <taxon>Pseudomonadota</taxon>
        <taxon>Gammaproteobacteria</taxon>
        <taxon>Vibrionales</taxon>
        <taxon>Vibrionaceae</taxon>
        <taxon>Aliivibrio</taxon>
    </lineage>
</organism>
<sequence>MRIALCIEYDGAEYYGWQRQRDVNSVQEELEKALTIVANEPIEVHCAGRTDAGVHGTGQVVHFDTTSSRKLAAWMMGANANLPKNIAVRWAKEVNEDFHARFTATARRYRYIIYNNRLRPAILGHGVSHYHDALDANLMHEAGQYLLGENDFTSFRAVHCQSRSPWRNLMHLKVTRHGDFIVIDIKANAFVHHMVRNITGSLIEVGKGKQKPEWIKWLLEAKDRKLAGATAKAEGLYLVDVDYPLEWELPRVPLGPLFLDND</sequence>
<gene>
    <name evidence="1" type="primary">truA</name>
    <name type="ordered locus">VF_1696</name>
</gene>
<reference key="1">
    <citation type="journal article" date="2005" name="Proc. Natl. Acad. Sci. U.S.A.">
        <title>Complete genome sequence of Vibrio fischeri: a symbiotic bacterium with pathogenic congeners.</title>
        <authorList>
            <person name="Ruby E.G."/>
            <person name="Urbanowski M."/>
            <person name="Campbell J."/>
            <person name="Dunn A."/>
            <person name="Faini M."/>
            <person name="Gunsalus R."/>
            <person name="Lostroh P."/>
            <person name="Lupp C."/>
            <person name="McCann J."/>
            <person name="Millikan D."/>
            <person name="Schaefer A."/>
            <person name="Stabb E."/>
            <person name="Stevens A."/>
            <person name="Visick K."/>
            <person name="Whistler C."/>
            <person name="Greenberg E.P."/>
        </authorList>
    </citation>
    <scope>NUCLEOTIDE SEQUENCE [LARGE SCALE GENOMIC DNA]</scope>
    <source>
        <strain>ATCC 700601 / ES114</strain>
    </source>
</reference>
<protein>
    <recommendedName>
        <fullName evidence="1">tRNA pseudouridine synthase A</fullName>
        <ecNumber evidence="1">5.4.99.12</ecNumber>
    </recommendedName>
    <alternativeName>
        <fullName evidence="1">tRNA pseudouridine(38-40) synthase</fullName>
    </alternativeName>
    <alternativeName>
        <fullName evidence="1">tRNA pseudouridylate synthase I</fullName>
    </alternativeName>
    <alternativeName>
        <fullName evidence="1">tRNA-uridine isomerase I</fullName>
    </alternativeName>
</protein>